<name>END4_SALA4</name>
<gene>
    <name evidence="1" type="primary">nfo</name>
    <name type="ordered locus">SeAg_B2351</name>
</gene>
<dbReference type="EC" id="3.1.21.2" evidence="1"/>
<dbReference type="EMBL" id="CP001138">
    <property type="protein sequence ID" value="ACH51007.1"/>
    <property type="molecule type" value="Genomic_DNA"/>
</dbReference>
<dbReference type="RefSeq" id="WP_000873914.1">
    <property type="nucleotide sequence ID" value="NC_011149.1"/>
</dbReference>
<dbReference type="SMR" id="B5EYQ5"/>
<dbReference type="KEGG" id="sea:SeAg_B2351"/>
<dbReference type="HOGENOM" id="CLU_025885_0_4_6"/>
<dbReference type="Proteomes" id="UP000008819">
    <property type="component" value="Chromosome"/>
</dbReference>
<dbReference type="GO" id="GO:0008833">
    <property type="term" value="F:deoxyribonuclease IV (phage-T4-induced) activity"/>
    <property type="evidence" value="ECO:0007669"/>
    <property type="project" value="UniProtKB-UniRule"/>
</dbReference>
<dbReference type="GO" id="GO:0003677">
    <property type="term" value="F:DNA binding"/>
    <property type="evidence" value="ECO:0007669"/>
    <property type="project" value="InterPro"/>
</dbReference>
<dbReference type="GO" id="GO:0003906">
    <property type="term" value="F:DNA-(apurinic or apyrimidinic site) endonuclease activity"/>
    <property type="evidence" value="ECO:0007669"/>
    <property type="project" value="TreeGrafter"/>
</dbReference>
<dbReference type="GO" id="GO:0008081">
    <property type="term" value="F:phosphoric diester hydrolase activity"/>
    <property type="evidence" value="ECO:0007669"/>
    <property type="project" value="TreeGrafter"/>
</dbReference>
<dbReference type="GO" id="GO:0008270">
    <property type="term" value="F:zinc ion binding"/>
    <property type="evidence" value="ECO:0007669"/>
    <property type="project" value="UniProtKB-UniRule"/>
</dbReference>
<dbReference type="GO" id="GO:0006284">
    <property type="term" value="P:base-excision repair"/>
    <property type="evidence" value="ECO:0007669"/>
    <property type="project" value="TreeGrafter"/>
</dbReference>
<dbReference type="CDD" id="cd00019">
    <property type="entry name" value="AP2Ec"/>
    <property type="match status" value="1"/>
</dbReference>
<dbReference type="FunFam" id="3.20.20.150:FF:000001">
    <property type="entry name" value="Probable endonuclease 4"/>
    <property type="match status" value="1"/>
</dbReference>
<dbReference type="Gene3D" id="3.20.20.150">
    <property type="entry name" value="Divalent-metal-dependent TIM barrel enzymes"/>
    <property type="match status" value="1"/>
</dbReference>
<dbReference type="HAMAP" id="MF_00152">
    <property type="entry name" value="Nfo"/>
    <property type="match status" value="1"/>
</dbReference>
<dbReference type="InterPro" id="IPR001719">
    <property type="entry name" value="AP_endonuc_2"/>
</dbReference>
<dbReference type="InterPro" id="IPR018246">
    <property type="entry name" value="AP_endonuc_F2_Zn_BS"/>
</dbReference>
<dbReference type="InterPro" id="IPR036237">
    <property type="entry name" value="Xyl_isomerase-like_sf"/>
</dbReference>
<dbReference type="InterPro" id="IPR013022">
    <property type="entry name" value="Xyl_isomerase-like_TIM-brl"/>
</dbReference>
<dbReference type="NCBIfam" id="TIGR00587">
    <property type="entry name" value="nfo"/>
    <property type="match status" value="1"/>
</dbReference>
<dbReference type="NCBIfam" id="NF002199">
    <property type="entry name" value="PRK01060.1-4"/>
    <property type="match status" value="1"/>
</dbReference>
<dbReference type="PANTHER" id="PTHR21445:SF0">
    <property type="entry name" value="APURINIC-APYRIMIDINIC ENDONUCLEASE"/>
    <property type="match status" value="1"/>
</dbReference>
<dbReference type="PANTHER" id="PTHR21445">
    <property type="entry name" value="ENDONUCLEASE IV ENDODEOXYRIBONUCLEASE IV"/>
    <property type="match status" value="1"/>
</dbReference>
<dbReference type="Pfam" id="PF01261">
    <property type="entry name" value="AP_endonuc_2"/>
    <property type="match status" value="1"/>
</dbReference>
<dbReference type="SMART" id="SM00518">
    <property type="entry name" value="AP2Ec"/>
    <property type="match status" value="1"/>
</dbReference>
<dbReference type="SUPFAM" id="SSF51658">
    <property type="entry name" value="Xylose isomerase-like"/>
    <property type="match status" value="1"/>
</dbReference>
<dbReference type="PROSITE" id="PS00729">
    <property type="entry name" value="AP_NUCLEASE_F2_1"/>
    <property type="match status" value="1"/>
</dbReference>
<dbReference type="PROSITE" id="PS00730">
    <property type="entry name" value="AP_NUCLEASE_F2_2"/>
    <property type="match status" value="1"/>
</dbReference>
<dbReference type="PROSITE" id="PS00731">
    <property type="entry name" value="AP_NUCLEASE_F2_3"/>
    <property type="match status" value="1"/>
</dbReference>
<dbReference type="PROSITE" id="PS51432">
    <property type="entry name" value="AP_NUCLEASE_F2_4"/>
    <property type="match status" value="1"/>
</dbReference>
<keyword id="KW-0227">DNA damage</keyword>
<keyword id="KW-0234">DNA repair</keyword>
<keyword id="KW-0255">Endonuclease</keyword>
<keyword id="KW-0378">Hydrolase</keyword>
<keyword id="KW-0479">Metal-binding</keyword>
<keyword id="KW-0540">Nuclease</keyword>
<keyword id="KW-0862">Zinc</keyword>
<evidence type="ECO:0000255" key="1">
    <source>
        <dbReference type="HAMAP-Rule" id="MF_00152"/>
    </source>
</evidence>
<accession>B5EYQ5</accession>
<proteinExistence type="inferred from homology"/>
<organism>
    <name type="scientific">Salmonella agona (strain SL483)</name>
    <dbReference type="NCBI Taxonomy" id="454166"/>
    <lineage>
        <taxon>Bacteria</taxon>
        <taxon>Pseudomonadati</taxon>
        <taxon>Pseudomonadota</taxon>
        <taxon>Gammaproteobacteria</taxon>
        <taxon>Enterobacterales</taxon>
        <taxon>Enterobacteriaceae</taxon>
        <taxon>Salmonella</taxon>
    </lineage>
</organism>
<protein>
    <recommendedName>
        <fullName evidence="1">Probable endonuclease 4</fullName>
        <ecNumber evidence="1">3.1.21.2</ecNumber>
    </recommendedName>
    <alternativeName>
        <fullName evidence="1">Endodeoxyribonuclease IV</fullName>
    </alternativeName>
    <alternativeName>
        <fullName evidence="1">Endonuclease IV</fullName>
    </alternativeName>
</protein>
<sequence>MKYIGAHVSAAGGLANAPARAAEIGATAFALFTKNQRQWRAAPLTPQVIDDFKIACEKYHFSAAQILPHDSYLINLGHPVSEALEKSRDAFLDEMQRCEQLGLTLLNFHPGSHLMQIAQEDCLARIAESINIALAQTEGVTAVIENTAGQGSNLGFEFEQLAAIIDGVEDKSRVGVCIDTCHAFAAGYDLRTPEACEKTFAGFGKIVGFQYLRGMHLNDAKSAFGSRVDRHHSLGEGNIGHDAFRWIMQDGRFDGIPLILETINPDIWAEEIAWLKAQQIAEAVA</sequence>
<comment type="function">
    <text evidence="1">Endonuclease IV plays a role in DNA repair. It cleaves phosphodiester bonds at apurinic or apyrimidinic (AP) sites, generating a 3'-hydroxyl group and a 5'-terminal sugar phosphate.</text>
</comment>
<comment type="catalytic activity">
    <reaction evidence="1">
        <text>Endonucleolytic cleavage to 5'-phosphooligonucleotide end-products.</text>
        <dbReference type="EC" id="3.1.21.2"/>
    </reaction>
</comment>
<comment type="cofactor">
    <cofactor evidence="1">
        <name>Zn(2+)</name>
        <dbReference type="ChEBI" id="CHEBI:29105"/>
    </cofactor>
    <text evidence="1">Binds 3 Zn(2+) ions.</text>
</comment>
<comment type="similarity">
    <text evidence="1">Belongs to the AP endonuclease 2 family.</text>
</comment>
<feature type="chain" id="PRO_1000096898" description="Probable endonuclease 4">
    <location>
        <begin position="1"/>
        <end position="285"/>
    </location>
</feature>
<feature type="binding site" evidence="1">
    <location>
        <position position="69"/>
    </location>
    <ligand>
        <name>Zn(2+)</name>
        <dbReference type="ChEBI" id="CHEBI:29105"/>
        <label>1</label>
    </ligand>
</feature>
<feature type="binding site" evidence="1">
    <location>
        <position position="109"/>
    </location>
    <ligand>
        <name>Zn(2+)</name>
        <dbReference type="ChEBI" id="CHEBI:29105"/>
        <label>1</label>
    </ligand>
</feature>
<feature type="binding site" evidence="1">
    <location>
        <position position="145"/>
    </location>
    <ligand>
        <name>Zn(2+)</name>
        <dbReference type="ChEBI" id="CHEBI:29105"/>
        <label>1</label>
    </ligand>
</feature>
<feature type="binding site" evidence="1">
    <location>
        <position position="145"/>
    </location>
    <ligand>
        <name>Zn(2+)</name>
        <dbReference type="ChEBI" id="CHEBI:29105"/>
        <label>2</label>
    </ligand>
</feature>
<feature type="binding site" evidence="1">
    <location>
        <position position="179"/>
    </location>
    <ligand>
        <name>Zn(2+)</name>
        <dbReference type="ChEBI" id="CHEBI:29105"/>
        <label>2</label>
    </ligand>
</feature>
<feature type="binding site" evidence="1">
    <location>
        <position position="182"/>
    </location>
    <ligand>
        <name>Zn(2+)</name>
        <dbReference type="ChEBI" id="CHEBI:29105"/>
        <label>3</label>
    </ligand>
</feature>
<feature type="binding site" evidence="1">
    <location>
        <position position="216"/>
    </location>
    <ligand>
        <name>Zn(2+)</name>
        <dbReference type="ChEBI" id="CHEBI:29105"/>
        <label>2</label>
    </ligand>
</feature>
<feature type="binding site" evidence="1">
    <location>
        <position position="229"/>
    </location>
    <ligand>
        <name>Zn(2+)</name>
        <dbReference type="ChEBI" id="CHEBI:29105"/>
        <label>3</label>
    </ligand>
</feature>
<feature type="binding site" evidence="1">
    <location>
        <position position="231"/>
    </location>
    <ligand>
        <name>Zn(2+)</name>
        <dbReference type="ChEBI" id="CHEBI:29105"/>
        <label>3</label>
    </ligand>
</feature>
<feature type="binding site" evidence="1">
    <location>
        <position position="261"/>
    </location>
    <ligand>
        <name>Zn(2+)</name>
        <dbReference type="ChEBI" id="CHEBI:29105"/>
        <label>2</label>
    </ligand>
</feature>
<reference key="1">
    <citation type="journal article" date="2011" name="J. Bacteriol.">
        <title>Comparative genomics of 28 Salmonella enterica isolates: evidence for CRISPR-mediated adaptive sublineage evolution.</title>
        <authorList>
            <person name="Fricke W.F."/>
            <person name="Mammel M.K."/>
            <person name="McDermott P.F."/>
            <person name="Tartera C."/>
            <person name="White D.G."/>
            <person name="Leclerc J.E."/>
            <person name="Ravel J."/>
            <person name="Cebula T.A."/>
        </authorList>
    </citation>
    <scope>NUCLEOTIDE SEQUENCE [LARGE SCALE GENOMIC DNA]</scope>
    <source>
        <strain>SL483</strain>
    </source>
</reference>